<keyword id="KW-0687">Ribonucleoprotein</keyword>
<keyword id="KW-0689">Ribosomal protein</keyword>
<keyword id="KW-0694">RNA-binding</keyword>
<keyword id="KW-0699">rRNA-binding</keyword>
<gene>
    <name evidence="1" type="primary">rpsH</name>
    <name type="ordered locus">CCA_00106</name>
</gene>
<sequence length="133" mass="15208">MGMTSDTIADLLTRIRNALKAEHLYVDLEHSKMREAIVRILKQHGFLAHYLVKEENRKRTMRIFLQYSNDRRPVIRQLKRVSKPSRRVYVPAAKIPYVFGNMGISVLSTSQGVLDGATARAKNIGGELLCLVW</sequence>
<evidence type="ECO:0000255" key="1">
    <source>
        <dbReference type="HAMAP-Rule" id="MF_01302"/>
    </source>
</evidence>
<evidence type="ECO:0000305" key="2"/>
<reference key="1">
    <citation type="journal article" date="2003" name="Nucleic Acids Res.">
        <title>Genome sequence of Chlamydophila caviae (Chlamydia psittaci GPIC): examining the role of niche-specific genes in the evolution of the Chlamydiaceae.</title>
        <authorList>
            <person name="Read T.D."/>
            <person name="Myers G.S.A."/>
            <person name="Brunham R.C."/>
            <person name="Nelson W.C."/>
            <person name="Paulsen I.T."/>
            <person name="Heidelberg J.F."/>
            <person name="Holtzapple E.K."/>
            <person name="Khouri H.M."/>
            <person name="Federova N.B."/>
            <person name="Carty H.A."/>
            <person name="Umayam L.A."/>
            <person name="Haft D.H."/>
            <person name="Peterson J.D."/>
            <person name="Beanan M.J."/>
            <person name="White O."/>
            <person name="Salzberg S.L."/>
            <person name="Hsia R.-C."/>
            <person name="McClarty G."/>
            <person name="Rank R.G."/>
            <person name="Bavoil P.M."/>
            <person name="Fraser C.M."/>
        </authorList>
    </citation>
    <scope>NUCLEOTIDE SEQUENCE [LARGE SCALE GENOMIC DNA]</scope>
    <source>
        <strain>ATCC VR-813 / DSM 19441 / 03DC25 / GPIC</strain>
    </source>
</reference>
<proteinExistence type="inferred from homology"/>
<comment type="function">
    <text evidence="1">One of the primary rRNA binding proteins, it binds directly to 16S rRNA central domain where it helps coordinate assembly of the platform of the 30S subunit.</text>
</comment>
<comment type="subunit">
    <text evidence="1">Part of the 30S ribosomal subunit. Contacts proteins S5 and S12.</text>
</comment>
<comment type="similarity">
    <text evidence="1">Belongs to the universal ribosomal protein uS8 family.</text>
</comment>
<name>RS8_CHLCV</name>
<accession>Q824N8</accession>
<protein>
    <recommendedName>
        <fullName evidence="1">Small ribosomal subunit protein uS8</fullName>
    </recommendedName>
    <alternativeName>
        <fullName evidence="2">30S ribosomal protein S8</fullName>
    </alternativeName>
</protein>
<feature type="chain" id="PRO_0000126390" description="Small ribosomal subunit protein uS8">
    <location>
        <begin position="1"/>
        <end position="133"/>
    </location>
</feature>
<organism>
    <name type="scientific">Chlamydia caviae (strain ATCC VR-813 / DSM 19441 / 03DC25 / GPIC)</name>
    <name type="common">Chlamydophila caviae</name>
    <dbReference type="NCBI Taxonomy" id="227941"/>
    <lineage>
        <taxon>Bacteria</taxon>
        <taxon>Pseudomonadati</taxon>
        <taxon>Chlamydiota</taxon>
        <taxon>Chlamydiia</taxon>
        <taxon>Chlamydiales</taxon>
        <taxon>Chlamydiaceae</taxon>
        <taxon>Chlamydia/Chlamydophila group</taxon>
        <taxon>Chlamydia</taxon>
    </lineage>
</organism>
<dbReference type="EMBL" id="AE015925">
    <property type="protein sequence ID" value="AAP04858.1"/>
    <property type="molecule type" value="Genomic_DNA"/>
</dbReference>
<dbReference type="RefSeq" id="WP_011006079.1">
    <property type="nucleotide sequence ID" value="NC_003361.3"/>
</dbReference>
<dbReference type="SMR" id="Q824N8"/>
<dbReference type="STRING" id="227941.CCA_00106"/>
<dbReference type="KEGG" id="cca:CCA_00106"/>
<dbReference type="eggNOG" id="COG0096">
    <property type="taxonomic scope" value="Bacteria"/>
</dbReference>
<dbReference type="HOGENOM" id="CLU_098428_0_2_0"/>
<dbReference type="OrthoDB" id="9802617at2"/>
<dbReference type="Proteomes" id="UP000002193">
    <property type="component" value="Chromosome"/>
</dbReference>
<dbReference type="GO" id="GO:1990904">
    <property type="term" value="C:ribonucleoprotein complex"/>
    <property type="evidence" value="ECO:0007669"/>
    <property type="project" value="UniProtKB-KW"/>
</dbReference>
<dbReference type="GO" id="GO:0005840">
    <property type="term" value="C:ribosome"/>
    <property type="evidence" value="ECO:0007669"/>
    <property type="project" value="UniProtKB-KW"/>
</dbReference>
<dbReference type="GO" id="GO:0019843">
    <property type="term" value="F:rRNA binding"/>
    <property type="evidence" value="ECO:0007669"/>
    <property type="project" value="UniProtKB-UniRule"/>
</dbReference>
<dbReference type="GO" id="GO:0003735">
    <property type="term" value="F:structural constituent of ribosome"/>
    <property type="evidence" value="ECO:0007669"/>
    <property type="project" value="InterPro"/>
</dbReference>
<dbReference type="GO" id="GO:0006412">
    <property type="term" value="P:translation"/>
    <property type="evidence" value="ECO:0007669"/>
    <property type="project" value="UniProtKB-UniRule"/>
</dbReference>
<dbReference type="FunFam" id="3.30.1370.30:FF:000002">
    <property type="entry name" value="30S ribosomal protein S8"/>
    <property type="match status" value="1"/>
</dbReference>
<dbReference type="FunFam" id="3.30.1490.10:FF:000001">
    <property type="entry name" value="30S ribosomal protein S8"/>
    <property type="match status" value="1"/>
</dbReference>
<dbReference type="Gene3D" id="3.30.1370.30">
    <property type="match status" value="1"/>
</dbReference>
<dbReference type="Gene3D" id="3.30.1490.10">
    <property type="match status" value="1"/>
</dbReference>
<dbReference type="HAMAP" id="MF_01302_B">
    <property type="entry name" value="Ribosomal_uS8_B"/>
    <property type="match status" value="1"/>
</dbReference>
<dbReference type="InterPro" id="IPR000630">
    <property type="entry name" value="Ribosomal_uS8"/>
</dbReference>
<dbReference type="InterPro" id="IPR047863">
    <property type="entry name" value="Ribosomal_uS8_CS"/>
</dbReference>
<dbReference type="InterPro" id="IPR035987">
    <property type="entry name" value="Ribosomal_uS8_sf"/>
</dbReference>
<dbReference type="NCBIfam" id="NF001109">
    <property type="entry name" value="PRK00136.1"/>
    <property type="match status" value="1"/>
</dbReference>
<dbReference type="PANTHER" id="PTHR11758">
    <property type="entry name" value="40S RIBOSOMAL PROTEIN S15A"/>
    <property type="match status" value="1"/>
</dbReference>
<dbReference type="Pfam" id="PF00410">
    <property type="entry name" value="Ribosomal_S8"/>
    <property type="match status" value="1"/>
</dbReference>
<dbReference type="SUPFAM" id="SSF56047">
    <property type="entry name" value="Ribosomal protein S8"/>
    <property type="match status" value="1"/>
</dbReference>
<dbReference type="PROSITE" id="PS00053">
    <property type="entry name" value="RIBOSOMAL_S8"/>
    <property type="match status" value="1"/>
</dbReference>